<feature type="chain" id="PRO_0000061265" description="Cytochrome b">
    <location>
        <begin position="1"/>
        <end position="378"/>
    </location>
</feature>
<feature type="transmembrane region" description="Helical" evidence="2">
    <location>
        <begin position="33"/>
        <end position="53"/>
    </location>
</feature>
<feature type="transmembrane region" description="Helical" evidence="2">
    <location>
        <begin position="77"/>
        <end position="98"/>
    </location>
</feature>
<feature type="transmembrane region" description="Helical" evidence="2">
    <location>
        <begin position="113"/>
        <end position="133"/>
    </location>
</feature>
<feature type="transmembrane region" description="Helical" evidence="2">
    <location>
        <begin position="178"/>
        <end position="198"/>
    </location>
</feature>
<feature type="transmembrane region" description="Helical" evidence="2">
    <location>
        <begin position="226"/>
        <end position="246"/>
    </location>
</feature>
<feature type="transmembrane region" description="Helical" evidence="2">
    <location>
        <begin position="288"/>
        <end position="308"/>
    </location>
</feature>
<feature type="transmembrane region" description="Helical" evidence="2">
    <location>
        <begin position="320"/>
        <end position="340"/>
    </location>
</feature>
<feature type="transmembrane region" description="Helical" evidence="2">
    <location>
        <begin position="347"/>
        <end position="367"/>
    </location>
</feature>
<feature type="binding site" description="axial binding residue" evidence="2">
    <location>
        <position position="83"/>
    </location>
    <ligand>
        <name>heme b</name>
        <dbReference type="ChEBI" id="CHEBI:60344"/>
        <label>b562</label>
    </ligand>
    <ligandPart>
        <name>Fe</name>
        <dbReference type="ChEBI" id="CHEBI:18248"/>
    </ligandPart>
</feature>
<feature type="binding site" description="axial binding residue" evidence="2">
    <location>
        <position position="97"/>
    </location>
    <ligand>
        <name>heme b</name>
        <dbReference type="ChEBI" id="CHEBI:60344"/>
        <label>b566</label>
    </ligand>
    <ligandPart>
        <name>Fe</name>
        <dbReference type="ChEBI" id="CHEBI:18248"/>
    </ligandPart>
</feature>
<feature type="binding site" description="axial binding residue" evidence="2">
    <location>
        <position position="196"/>
    </location>
    <ligand>
        <name>heme b</name>
        <dbReference type="ChEBI" id="CHEBI:60344"/>
        <label>b566</label>
    </ligand>
    <ligandPart>
        <name>Fe</name>
        <dbReference type="ChEBI" id="CHEBI:18248"/>
    </ligandPart>
</feature>
<feature type="binding site" evidence="2">
    <location>
        <position position="201"/>
    </location>
    <ligand>
        <name>a ubiquinone</name>
        <dbReference type="ChEBI" id="CHEBI:16389"/>
    </ligand>
</feature>
<sequence length="378" mass="42319">MASLRKTHPLLKIANDALIDLPAPSNISIWWNSGSLLGLCLIIQILTGLFLSMHYTPDTTTAFSSVAHICRDVNYGWLIRNMHANGASFFFICIYFHIGRGLYYGSYLYKETXNVGVILLLLVMMTAFVGYVLPWGQMSFWGATVITNLLSAVPYIGNSLVQWLWGGFSVDNATLTRFFAFLFLLPFIIAAMTMIHLIFLHETGSTNPVGLNSNAEKIPFHPYYSFKDLLGFIMLLTILVSLALFSPNLLGDPDNLHPANPLVTPPHIKPEWYFLFAYAILRSIPNKLGGVLALLFSILVLLLMPILHTSKLRTLTFRPLTQFLFWLLIADVAVLTWIGGMPVEHPFIIIGQIASALYFTIFLVLFPTAGLLENKMLT</sequence>
<gene>
    <name type="primary">mt-cyb</name>
    <name type="synonym">cob</name>
    <name type="synonym">cytb</name>
    <name type="synonym">mtcyb</name>
</gene>
<organism>
    <name type="scientific">Nannacara anomala</name>
    <name type="common">Goldeneye cichlid</name>
    <dbReference type="NCBI Taxonomy" id="168802"/>
    <lineage>
        <taxon>Eukaryota</taxon>
        <taxon>Metazoa</taxon>
        <taxon>Chordata</taxon>
        <taxon>Craniata</taxon>
        <taxon>Vertebrata</taxon>
        <taxon>Euteleostomi</taxon>
        <taxon>Actinopterygii</taxon>
        <taxon>Neopterygii</taxon>
        <taxon>Teleostei</taxon>
        <taxon>Neoteleostei</taxon>
        <taxon>Acanthomorphata</taxon>
        <taxon>Ovalentaria</taxon>
        <taxon>Cichlomorphae</taxon>
        <taxon>Cichliformes</taxon>
        <taxon>Cichlidae</taxon>
        <taxon>New World cichlids</taxon>
        <taxon>Cichlasomatinae</taxon>
        <taxon>Cichlasomatini</taxon>
        <taxon>Nannacara</taxon>
    </lineage>
</organism>
<dbReference type="EMBL" id="AY050618">
    <property type="protein sequence ID" value="AAL08382.1"/>
    <property type="molecule type" value="Genomic_DNA"/>
</dbReference>
<dbReference type="GO" id="GO:0005743">
    <property type="term" value="C:mitochondrial inner membrane"/>
    <property type="evidence" value="ECO:0007669"/>
    <property type="project" value="UniProtKB-SubCell"/>
</dbReference>
<dbReference type="GO" id="GO:0045275">
    <property type="term" value="C:respiratory chain complex III"/>
    <property type="evidence" value="ECO:0007669"/>
    <property type="project" value="InterPro"/>
</dbReference>
<dbReference type="GO" id="GO:0046872">
    <property type="term" value="F:metal ion binding"/>
    <property type="evidence" value="ECO:0007669"/>
    <property type="project" value="UniProtKB-KW"/>
</dbReference>
<dbReference type="GO" id="GO:0008121">
    <property type="term" value="F:ubiquinol-cytochrome-c reductase activity"/>
    <property type="evidence" value="ECO:0007669"/>
    <property type="project" value="InterPro"/>
</dbReference>
<dbReference type="GO" id="GO:0006122">
    <property type="term" value="P:mitochondrial electron transport, ubiquinol to cytochrome c"/>
    <property type="evidence" value="ECO:0007669"/>
    <property type="project" value="TreeGrafter"/>
</dbReference>
<dbReference type="CDD" id="cd00290">
    <property type="entry name" value="cytochrome_b_C"/>
    <property type="match status" value="1"/>
</dbReference>
<dbReference type="CDD" id="cd00284">
    <property type="entry name" value="Cytochrome_b_N"/>
    <property type="match status" value="1"/>
</dbReference>
<dbReference type="FunFam" id="1.20.810.10:FF:000002">
    <property type="entry name" value="Cytochrome b"/>
    <property type="match status" value="1"/>
</dbReference>
<dbReference type="Gene3D" id="1.20.810.10">
    <property type="entry name" value="Cytochrome Bc1 Complex, Chain C"/>
    <property type="match status" value="1"/>
</dbReference>
<dbReference type="InterPro" id="IPR005798">
    <property type="entry name" value="Cyt_b/b6_C"/>
</dbReference>
<dbReference type="InterPro" id="IPR036150">
    <property type="entry name" value="Cyt_b/b6_C_sf"/>
</dbReference>
<dbReference type="InterPro" id="IPR005797">
    <property type="entry name" value="Cyt_b/b6_N"/>
</dbReference>
<dbReference type="InterPro" id="IPR027387">
    <property type="entry name" value="Cytb/b6-like_sf"/>
</dbReference>
<dbReference type="InterPro" id="IPR030689">
    <property type="entry name" value="Cytochrome_b"/>
</dbReference>
<dbReference type="InterPro" id="IPR048260">
    <property type="entry name" value="Cytochrome_b_C_euk/bac"/>
</dbReference>
<dbReference type="InterPro" id="IPR048259">
    <property type="entry name" value="Cytochrome_b_N_euk/bac"/>
</dbReference>
<dbReference type="InterPro" id="IPR016174">
    <property type="entry name" value="Di-haem_cyt_TM"/>
</dbReference>
<dbReference type="PANTHER" id="PTHR19271">
    <property type="entry name" value="CYTOCHROME B"/>
    <property type="match status" value="1"/>
</dbReference>
<dbReference type="PANTHER" id="PTHR19271:SF16">
    <property type="entry name" value="CYTOCHROME B"/>
    <property type="match status" value="1"/>
</dbReference>
<dbReference type="Pfam" id="PF00032">
    <property type="entry name" value="Cytochrom_B_C"/>
    <property type="match status" value="1"/>
</dbReference>
<dbReference type="Pfam" id="PF00033">
    <property type="entry name" value="Cytochrome_B"/>
    <property type="match status" value="1"/>
</dbReference>
<dbReference type="PIRSF" id="PIRSF038885">
    <property type="entry name" value="COB"/>
    <property type="match status" value="1"/>
</dbReference>
<dbReference type="SUPFAM" id="SSF81648">
    <property type="entry name" value="a domain/subunit of cytochrome bc1 complex (Ubiquinol-cytochrome c reductase)"/>
    <property type="match status" value="1"/>
</dbReference>
<dbReference type="SUPFAM" id="SSF81342">
    <property type="entry name" value="Transmembrane di-heme cytochromes"/>
    <property type="match status" value="1"/>
</dbReference>
<dbReference type="PROSITE" id="PS51003">
    <property type="entry name" value="CYTB_CTER"/>
    <property type="match status" value="1"/>
</dbReference>
<dbReference type="PROSITE" id="PS51002">
    <property type="entry name" value="CYTB_NTER"/>
    <property type="match status" value="1"/>
</dbReference>
<proteinExistence type="inferred from homology"/>
<comment type="function">
    <text evidence="2">Component of the ubiquinol-cytochrome c reductase complex (complex III or cytochrome b-c1 complex) that is part of the mitochondrial respiratory chain. The b-c1 complex mediates electron transfer from ubiquinol to cytochrome c. Contributes to the generation of a proton gradient across the mitochondrial membrane that is then used for ATP synthesis.</text>
</comment>
<comment type="cofactor">
    <cofactor evidence="2">
        <name>heme b</name>
        <dbReference type="ChEBI" id="CHEBI:60344"/>
    </cofactor>
    <text evidence="2">Binds 2 heme b groups non-covalently.</text>
</comment>
<comment type="subunit">
    <text evidence="2">The cytochrome bc1 complex contains 3 respiratory subunits (MT-CYB, CYC1 and UQCRFS1), 2 core proteins (UQCRC1 and UQCRC2) and probably 6 low-molecular weight proteins.</text>
</comment>
<comment type="subcellular location">
    <subcellularLocation>
        <location evidence="2">Mitochondrion inner membrane</location>
        <topology evidence="2">Multi-pass membrane protein</topology>
    </subcellularLocation>
</comment>
<comment type="miscellaneous">
    <text evidence="1">Heme 1 (or BL or b562) is low-potential and absorbs at about 562 nm, and heme 2 (or BH or b566) is high-potential and absorbs at about 566 nm.</text>
</comment>
<comment type="similarity">
    <text evidence="3 4">Belongs to the cytochrome b family.</text>
</comment>
<comment type="caution">
    <text evidence="2">The full-length protein contains only eight transmembrane helices, not nine as predicted by bioinformatics tools.</text>
</comment>
<accession>Q8LZ88</accession>
<geneLocation type="mitochondrion"/>
<evidence type="ECO:0000250" key="1"/>
<evidence type="ECO:0000250" key="2">
    <source>
        <dbReference type="UniProtKB" id="P00157"/>
    </source>
</evidence>
<evidence type="ECO:0000255" key="3">
    <source>
        <dbReference type="PROSITE-ProRule" id="PRU00967"/>
    </source>
</evidence>
<evidence type="ECO:0000255" key="4">
    <source>
        <dbReference type="PROSITE-ProRule" id="PRU00968"/>
    </source>
</evidence>
<protein>
    <recommendedName>
        <fullName>Cytochrome b</fullName>
    </recommendedName>
    <alternativeName>
        <fullName>Complex III subunit 3</fullName>
    </alternativeName>
    <alternativeName>
        <fullName>Complex III subunit III</fullName>
    </alternativeName>
    <alternativeName>
        <fullName>Cytochrome b-c1 complex subunit 3</fullName>
    </alternativeName>
    <alternativeName>
        <fullName>Ubiquinol-cytochrome-c reductase complex cytochrome b subunit</fullName>
    </alternativeName>
</protein>
<reference key="1">
    <citation type="submission" date="2001-08" db="EMBL/GenBank/DDBJ databases">
        <title>Phylogeny of the Central American Cichlidae (Teleostei: Perciformes) based on combined morphobehavioral and cytochrome b data.</title>
        <authorList>
            <person name="Rican O."/>
            <person name="Zrzavy J."/>
            <person name="Obornik M."/>
            <person name="Novak J."/>
        </authorList>
    </citation>
    <scope>NUCLEOTIDE SEQUENCE [GENOMIC DNA]</scope>
</reference>
<name>CYB_NANAN</name>
<keyword id="KW-0249">Electron transport</keyword>
<keyword id="KW-0349">Heme</keyword>
<keyword id="KW-0408">Iron</keyword>
<keyword id="KW-0472">Membrane</keyword>
<keyword id="KW-0479">Metal-binding</keyword>
<keyword id="KW-0496">Mitochondrion</keyword>
<keyword id="KW-0999">Mitochondrion inner membrane</keyword>
<keyword id="KW-0679">Respiratory chain</keyword>
<keyword id="KW-0812">Transmembrane</keyword>
<keyword id="KW-1133">Transmembrane helix</keyword>
<keyword id="KW-0813">Transport</keyword>
<keyword id="KW-0830">Ubiquinone</keyword>